<name>JA15R_ARATH</name>
<dbReference type="EMBL" id="AB638776">
    <property type="protein sequence ID" value="BAL48824.1"/>
    <property type="molecule type" value="mRNA"/>
</dbReference>
<dbReference type="EMBL" id="AB638777">
    <property type="protein sequence ID" value="BAL48825.1"/>
    <property type="molecule type" value="mRNA"/>
</dbReference>
<dbReference type="EMBL" id="AB638779">
    <property type="protein sequence ID" value="BAL48827.1"/>
    <property type="molecule type" value="mRNA"/>
</dbReference>
<dbReference type="SMR" id="H3JUC3"/>
<dbReference type="HOGENOM" id="CLU_2052851_0_0_1"/>
<dbReference type="ExpressionAtlas" id="H3JUC3">
    <property type="expression patterns" value="baseline and differential"/>
</dbReference>
<dbReference type="GO" id="GO:0030246">
    <property type="term" value="F:carbohydrate binding"/>
    <property type="evidence" value="ECO:0007669"/>
    <property type="project" value="UniProtKB-KW"/>
</dbReference>
<dbReference type="CDD" id="cd09612">
    <property type="entry name" value="Jacalin"/>
    <property type="match status" value="1"/>
</dbReference>
<dbReference type="FunFam" id="2.100.10.30:FF:000001">
    <property type="entry name" value="Jacalin-related lectin 33"/>
    <property type="match status" value="1"/>
</dbReference>
<dbReference type="Gene3D" id="2.100.10.30">
    <property type="entry name" value="Jacalin-like lectin domain"/>
    <property type="match status" value="1"/>
</dbReference>
<dbReference type="InterPro" id="IPR001229">
    <property type="entry name" value="Jacalin-like_lectin_dom"/>
</dbReference>
<dbReference type="InterPro" id="IPR033734">
    <property type="entry name" value="Jacalin-like_lectin_dom_plant"/>
</dbReference>
<dbReference type="InterPro" id="IPR036404">
    <property type="entry name" value="Jacalin-like_lectin_dom_sf"/>
</dbReference>
<dbReference type="PANTHER" id="PTHR47293:SF21">
    <property type="entry name" value="GENOME ASSEMBLY, CHROMOSOME: A06"/>
    <property type="match status" value="1"/>
</dbReference>
<dbReference type="PANTHER" id="PTHR47293">
    <property type="entry name" value="JACALIN-RELATED LECTIN 3"/>
    <property type="match status" value="1"/>
</dbReference>
<dbReference type="Pfam" id="PF01419">
    <property type="entry name" value="Jacalin"/>
    <property type="match status" value="1"/>
</dbReference>
<dbReference type="SMART" id="SM00915">
    <property type="entry name" value="Jacalin"/>
    <property type="match status" value="1"/>
</dbReference>
<dbReference type="SUPFAM" id="SSF51101">
    <property type="entry name" value="Mannose-binding lectins"/>
    <property type="match status" value="1"/>
</dbReference>
<dbReference type="PROSITE" id="PS51752">
    <property type="entry name" value="JACALIN_LECTIN"/>
    <property type="match status" value="1"/>
</dbReference>
<proteinExistence type="evidence at transcript level"/>
<sequence>MSTPSGSNPLPMADKLEAKGGNGGKIWDDGVHEGVSQIYIQEGSTGGIASIKFDYVKNGQPKAGSTHGNSYQNFTEWFDLNHTCDEHILSVKCYYDEGEIQGLVIKTNIRTSAYMGYNIGTTFTLEVKGKKIVGFHGSFDKNLTSLGAYFAPLSPAK</sequence>
<feature type="chain" id="PRO_0000430382" description="Jacalin-related lectin 15">
    <location>
        <begin position="1"/>
        <end position="157"/>
    </location>
</feature>
<feature type="domain" description="Jacalin-type lectin" evidence="1">
    <location>
        <begin position="13"/>
        <end position="152"/>
    </location>
</feature>
<organism>
    <name type="scientific">Arabidopsis thaliana</name>
    <name type="common">Mouse-ear cress</name>
    <dbReference type="NCBI Taxonomy" id="3702"/>
    <lineage>
        <taxon>Eukaryota</taxon>
        <taxon>Viridiplantae</taxon>
        <taxon>Streptophyta</taxon>
        <taxon>Embryophyta</taxon>
        <taxon>Tracheophyta</taxon>
        <taxon>Spermatophyta</taxon>
        <taxon>Magnoliopsida</taxon>
        <taxon>eudicotyledons</taxon>
        <taxon>Gunneridae</taxon>
        <taxon>Pentapetalae</taxon>
        <taxon>rosids</taxon>
        <taxon>malvids</taxon>
        <taxon>Brassicales</taxon>
        <taxon>Brassicaceae</taxon>
        <taxon>Camelineae</taxon>
        <taxon>Arabidopsis</taxon>
    </lineage>
</organism>
<keyword id="KW-0430">Lectin</keyword>
<gene>
    <name type="primary">JAL15</name>
    <name type="synonym">JAX1</name>
</gene>
<evidence type="ECO:0000255" key="1">
    <source>
        <dbReference type="PROSITE-ProRule" id="PRU01088"/>
    </source>
</evidence>
<evidence type="ECO:0000269" key="2">
    <source>
    </source>
</evidence>
<evidence type="ECO:0000305" key="3"/>
<evidence type="ECO:0000305" key="4">
    <source>
    </source>
</evidence>
<protein>
    <recommendedName>
        <fullName>Jacalin-related lectin 15</fullName>
    </recommendedName>
    <alternativeName>
        <fullName>Protein JACALIN-TYPE LECTIN REQUIRED FOR POTEXVIRUS RESISTANCE1</fullName>
    </alternativeName>
</protein>
<comment type="function">
    <text evidence="2">Confers broad resistance to potexviruses. Inhibits virus accumulation at the cellular level.</text>
</comment>
<comment type="tissue specificity">
    <text evidence="2">Expressed in stems, leaves and flowers. Not detected in roots.</text>
</comment>
<comment type="induction">
    <text evidence="2">Not induced upon virus infection.</text>
</comment>
<comment type="similarity">
    <text evidence="1 3">Belongs to the jacalin lectin family.</text>
</comment>
<comment type="caution">
    <text evidence="4">The plantago asiatica mosaic virus (PlAMV)-resistant ecotypes (cv. Bay-0, cv. Ga-0, cv. Dra-2, cv. Eil-0 and cv. Is-1) encoded a full-length 157-amino-acid proteins, whereas in the susceptible ecotypes (cv. Col-0 and cv. Ler), the presence of a stop codon in the first exon results in the production of a N-terminal 36-amino-acid fragments (AC F4I9R6) (PubMed:22307853). However, the identification of a small peptide spanning an alternative splice junction leads to the proposal of an alternative gene model in cv. Columbia.</text>
</comment>
<reference key="1">
    <citation type="journal article" date="2012" name="Plant Cell">
        <title>Lectin-mediated resistance impairs plant virus infection at the cellular level.</title>
        <authorList>
            <person name="Yamaji Y."/>
            <person name="Maejima K."/>
            <person name="Ozeki J."/>
            <person name="Komatsu K."/>
            <person name="Shiraishi T."/>
            <person name="Okano Y."/>
            <person name="Himeno M."/>
            <person name="Sugawara K."/>
            <person name="Neriya Y."/>
            <person name="Minato N."/>
            <person name="Miura C."/>
            <person name="Hashimoto M."/>
            <person name="Namba S."/>
        </authorList>
    </citation>
    <scope>NUCLEOTIDE SEQUENCE [MRNA]</scope>
    <scope>FUNCTION</scope>
    <scope>TISSUE SPECIFICITY</scope>
    <scope>INDUCTION</scope>
    <source>
        <strain>cv. Dra-2</strain>
        <strain>cv. Eil-0</strain>
        <strain>cv. Is-1</strain>
    </source>
</reference>
<reference key="2">
    <citation type="journal article" date="2008" name="Plant Cell Physiol.">
        <title>Antagonistic jacalin-related lectins regulate the size of ER body-type beta-glucosidase complexes in Arabidopsis thaliana.</title>
        <authorList>
            <person name="Nagano A.J."/>
            <person name="Fukao Y."/>
            <person name="Fujiwara M."/>
            <person name="Nishimura M."/>
            <person name="Hara-Nishimura I."/>
        </authorList>
    </citation>
    <scope>GENE FAMILY</scope>
    <scope>NOMENCLATURE</scope>
</reference>
<accession>H3JUC3</accession>